<keyword id="KW-0028">Amino-acid biosynthesis</keyword>
<keyword id="KW-0100">Branched-chain amino acid biosynthesis</keyword>
<keyword id="KW-0432">Leucine biosynthesis</keyword>
<keyword id="KW-0456">Lyase</keyword>
<keyword id="KW-1185">Reference proteome</keyword>
<reference key="1">
    <citation type="journal article" date="2007" name="Genome Res.">
        <title>Genome characteristics of facultatively symbiotic Frankia sp. strains reflect host range and host plant biogeography.</title>
        <authorList>
            <person name="Normand P."/>
            <person name="Lapierre P."/>
            <person name="Tisa L.S."/>
            <person name="Gogarten J.P."/>
            <person name="Alloisio N."/>
            <person name="Bagnarol E."/>
            <person name="Bassi C.A."/>
            <person name="Berry A.M."/>
            <person name="Bickhart D.M."/>
            <person name="Choisne N."/>
            <person name="Couloux A."/>
            <person name="Cournoyer B."/>
            <person name="Cruveiller S."/>
            <person name="Daubin V."/>
            <person name="Demange N."/>
            <person name="Francino M.P."/>
            <person name="Goltsman E."/>
            <person name="Huang Y."/>
            <person name="Kopp O.R."/>
            <person name="Labarre L."/>
            <person name="Lapidus A."/>
            <person name="Lavire C."/>
            <person name="Marechal J."/>
            <person name="Martinez M."/>
            <person name="Mastronunzio J.E."/>
            <person name="Mullin B.C."/>
            <person name="Niemann J."/>
            <person name="Pujic P."/>
            <person name="Rawnsley T."/>
            <person name="Rouy Z."/>
            <person name="Schenowitz C."/>
            <person name="Sellstedt A."/>
            <person name="Tavares F."/>
            <person name="Tomkins J.P."/>
            <person name="Vallenet D."/>
            <person name="Valverde C."/>
            <person name="Wall L.G."/>
            <person name="Wang Y."/>
            <person name="Medigue C."/>
            <person name="Benson D.R."/>
        </authorList>
    </citation>
    <scope>NUCLEOTIDE SEQUENCE [LARGE SCALE GENOMIC DNA]</scope>
    <source>
        <strain>DSM 45818 / CECT 9043 / HFP020203 / CcI3</strain>
    </source>
</reference>
<sequence>MEAFTIHTGRAVPLRRSDVDTDQIIPSEWLKRIERTGFGAGLFAQWRADDGFVLNEPAYAAASILLAGSDFGTGSSREHAVWALQDYGFRAVLSPRFADIFRGNALGNGLLPVQLSAETVEALTSAVEADPTIEITVDLVAREVRGAGLVATFDLDDFTRWRLMEGLDDVGLTLRHEDMITSFEAGRPAWSPTTA</sequence>
<comment type="function">
    <text evidence="1">Catalyzes the isomerization between 2-isopropylmalate and 3-isopropylmalate, via the formation of 2-isopropylmaleate.</text>
</comment>
<comment type="catalytic activity">
    <reaction evidence="1">
        <text>(2R,3S)-3-isopropylmalate = (2S)-2-isopropylmalate</text>
        <dbReference type="Rhea" id="RHEA:32287"/>
        <dbReference type="ChEBI" id="CHEBI:1178"/>
        <dbReference type="ChEBI" id="CHEBI:35121"/>
        <dbReference type="EC" id="4.2.1.33"/>
    </reaction>
</comment>
<comment type="pathway">
    <text evidence="1">Amino-acid biosynthesis; L-leucine biosynthesis; L-leucine from 3-methyl-2-oxobutanoate: step 2/4.</text>
</comment>
<comment type="subunit">
    <text evidence="1">Heterodimer of LeuC and LeuD.</text>
</comment>
<comment type="similarity">
    <text evidence="1">Belongs to the LeuD family. LeuD type 1 subfamily.</text>
</comment>
<protein>
    <recommendedName>
        <fullName evidence="1">3-isopropylmalate dehydratase small subunit</fullName>
        <ecNumber evidence="1">4.2.1.33</ecNumber>
    </recommendedName>
    <alternativeName>
        <fullName evidence="1">Alpha-IPM isomerase</fullName>
        <shortName evidence="1">IPMI</shortName>
    </alternativeName>
    <alternativeName>
        <fullName evidence="1">Isopropylmalate isomerase</fullName>
    </alternativeName>
</protein>
<proteinExistence type="inferred from homology"/>
<dbReference type="EC" id="4.2.1.33" evidence="1"/>
<dbReference type="EMBL" id="CP000249">
    <property type="protein sequence ID" value="ABD12972.1"/>
    <property type="molecule type" value="Genomic_DNA"/>
</dbReference>
<dbReference type="RefSeq" id="WP_011437996.1">
    <property type="nucleotide sequence ID" value="NZ_JENI01000005.1"/>
</dbReference>
<dbReference type="SMR" id="Q2J6X0"/>
<dbReference type="STRING" id="106370.Francci3_3620"/>
<dbReference type="KEGG" id="fra:Francci3_3620"/>
<dbReference type="eggNOG" id="COG0066">
    <property type="taxonomic scope" value="Bacteria"/>
</dbReference>
<dbReference type="HOGENOM" id="CLU_081378_0_1_11"/>
<dbReference type="OrthoDB" id="9777465at2"/>
<dbReference type="PhylomeDB" id="Q2J6X0"/>
<dbReference type="UniPathway" id="UPA00048">
    <property type="reaction ID" value="UER00071"/>
</dbReference>
<dbReference type="Proteomes" id="UP000001937">
    <property type="component" value="Chromosome"/>
</dbReference>
<dbReference type="GO" id="GO:0009316">
    <property type="term" value="C:3-isopropylmalate dehydratase complex"/>
    <property type="evidence" value="ECO:0007669"/>
    <property type="project" value="InterPro"/>
</dbReference>
<dbReference type="GO" id="GO:0003861">
    <property type="term" value="F:3-isopropylmalate dehydratase activity"/>
    <property type="evidence" value="ECO:0007669"/>
    <property type="project" value="UniProtKB-UniRule"/>
</dbReference>
<dbReference type="GO" id="GO:0009098">
    <property type="term" value="P:L-leucine biosynthetic process"/>
    <property type="evidence" value="ECO:0007669"/>
    <property type="project" value="UniProtKB-UniRule"/>
</dbReference>
<dbReference type="CDD" id="cd01577">
    <property type="entry name" value="IPMI_Swivel"/>
    <property type="match status" value="1"/>
</dbReference>
<dbReference type="FunFam" id="3.20.19.10:FF:000003">
    <property type="entry name" value="3-isopropylmalate dehydratase small subunit"/>
    <property type="match status" value="1"/>
</dbReference>
<dbReference type="Gene3D" id="3.20.19.10">
    <property type="entry name" value="Aconitase, domain 4"/>
    <property type="match status" value="1"/>
</dbReference>
<dbReference type="HAMAP" id="MF_01031">
    <property type="entry name" value="LeuD_type1"/>
    <property type="match status" value="1"/>
</dbReference>
<dbReference type="InterPro" id="IPR004431">
    <property type="entry name" value="3-IsopropMal_deHydase_ssu"/>
</dbReference>
<dbReference type="InterPro" id="IPR015928">
    <property type="entry name" value="Aconitase/3IPM_dehydase_swvl"/>
</dbReference>
<dbReference type="InterPro" id="IPR000573">
    <property type="entry name" value="AconitaseA/IPMdHydase_ssu_swvl"/>
</dbReference>
<dbReference type="InterPro" id="IPR033940">
    <property type="entry name" value="IPMI_Swivel"/>
</dbReference>
<dbReference type="InterPro" id="IPR050075">
    <property type="entry name" value="LeuD"/>
</dbReference>
<dbReference type="NCBIfam" id="TIGR00171">
    <property type="entry name" value="leuD"/>
    <property type="match status" value="1"/>
</dbReference>
<dbReference type="NCBIfam" id="NF002458">
    <property type="entry name" value="PRK01641.1"/>
    <property type="match status" value="1"/>
</dbReference>
<dbReference type="PANTHER" id="PTHR43345:SF5">
    <property type="entry name" value="3-ISOPROPYLMALATE DEHYDRATASE SMALL SUBUNIT"/>
    <property type="match status" value="1"/>
</dbReference>
<dbReference type="PANTHER" id="PTHR43345">
    <property type="entry name" value="3-ISOPROPYLMALATE DEHYDRATASE SMALL SUBUNIT 2-RELATED-RELATED"/>
    <property type="match status" value="1"/>
</dbReference>
<dbReference type="Pfam" id="PF00694">
    <property type="entry name" value="Aconitase_C"/>
    <property type="match status" value="1"/>
</dbReference>
<dbReference type="SUPFAM" id="SSF52016">
    <property type="entry name" value="LeuD/IlvD-like"/>
    <property type="match status" value="1"/>
</dbReference>
<accession>Q2J6X0</accession>
<evidence type="ECO:0000255" key="1">
    <source>
        <dbReference type="HAMAP-Rule" id="MF_01031"/>
    </source>
</evidence>
<gene>
    <name evidence="1" type="primary">leuD</name>
    <name type="ordered locus">Francci3_3620</name>
</gene>
<feature type="chain" id="PRO_1000063764" description="3-isopropylmalate dehydratase small subunit">
    <location>
        <begin position="1"/>
        <end position="195"/>
    </location>
</feature>
<organism>
    <name type="scientific">Frankia casuarinae (strain DSM 45818 / CECT 9043 / HFP020203 / CcI3)</name>
    <dbReference type="NCBI Taxonomy" id="106370"/>
    <lineage>
        <taxon>Bacteria</taxon>
        <taxon>Bacillati</taxon>
        <taxon>Actinomycetota</taxon>
        <taxon>Actinomycetes</taxon>
        <taxon>Frankiales</taxon>
        <taxon>Frankiaceae</taxon>
        <taxon>Frankia</taxon>
    </lineage>
</organism>
<name>LEUD_FRACC</name>